<keyword id="KW-0004">4Fe-4S</keyword>
<keyword id="KW-0963">Cytoplasm</keyword>
<keyword id="KW-0408">Iron</keyword>
<keyword id="KW-0411">Iron-sulfur</keyword>
<keyword id="KW-0479">Metal-binding</keyword>
<keyword id="KW-0662">Pyridine nucleotide biosynthesis</keyword>
<keyword id="KW-0808">Transferase</keyword>
<sequence>MTLLDETASAQFGDDVAPTEEWAAEVRRLARQRGATLLAHNYQLPAIQDVADHVGDSLALSRIAAEAPEDTIVFCGVHFMAETAKILSPDKTVLIPDARAGCSLADSITADQLREWKAEYPGAVVVSYVNTTAAVKAETDICCTSSNAVDVVASIPADREVLFCPDQFLGAHVRRVTGRTNMQIWAGECHVHAGINGDELADQARAHPDAELFVHPECGCATSALYLAGEGAFPADRVKILSTGGMLDAARESRASQVLVATEVGMLHQLRRAAPEIDFQAVNDRASCRYMKMITPAALLRCLTYGTDEVDVDHETARLARRSVQRMIEIGQPGGGE</sequence>
<feature type="chain" id="PRO_1000082320" description="Quinolinate synthase">
    <location>
        <begin position="1"/>
        <end position="337"/>
    </location>
</feature>
<feature type="binding site" evidence="1">
    <location>
        <position position="40"/>
    </location>
    <ligand>
        <name>iminosuccinate</name>
        <dbReference type="ChEBI" id="CHEBI:77875"/>
    </ligand>
</feature>
<feature type="binding site" evidence="1">
    <location>
        <position position="57"/>
    </location>
    <ligand>
        <name>iminosuccinate</name>
        <dbReference type="ChEBI" id="CHEBI:77875"/>
    </ligand>
</feature>
<feature type="binding site" evidence="1">
    <location>
        <position position="102"/>
    </location>
    <ligand>
        <name>[4Fe-4S] cluster</name>
        <dbReference type="ChEBI" id="CHEBI:49883"/>
    </ligand>
</feature>
<feature type="binding site" evidence="1">
    <location>
        <begin position="128"/>
        <end position="130"/>
    </location>
    <ligand>
        <name>iminosuccinate</name>
        <dbReference type="ChEBI" id="CHEBI:77875"/>
    </ligand>
</feature>
<feature type="binding site" evidence="1">
    <location>
        <position position="145"/>
    </location>
    <ligand>
        <name>iminosuccinate</name>
        <dbReference type="ChEBI" id="CHEBI:77875"/>
    </ligand>
</feature>
<feature type="binding site" evidence="1">
    <location>
        <position position="189"/>
    </location>
    <ligand>
        <name>[4Fe-4S] cluster</name>
        <dbReference type="ChEBI" id="CHEBI:49883"/>
    </ligand>
</feature>
<feature type="binding site" evidence="1">
    <location>
        <begin position="215"/>
        <end position="217"/>
    </location>
    <ligand>
        <name>iminosuccinate</name>
        <dbReference type="ChEBI" id="CHEBI:77875"/>
    </ligand>
</feature>
<feature type="binding site" evidence="1">
    <location>
        <position position="243"/>
    </location>
    <ligand>
        <name>iminosuccinate</name>
        <dbReference type="ChEBI" id="CHEBI:77875"/>
    </ligand>
</feature>
<feature type="binding site" evidence="1">
    <location>
        <position position="288"/>
    </location>
    <ligand>
        <name>[4Fe-4S] cluster</name>
        <dbReference type="ChEBI" id="CHEBI:49883"/>
    </ligand>
</feature>
<evidence type="ECO:0000255" key="1">
    <source>
        <dbReference type="HAMAP-Rule" id="MF_00568"/>
    </source>
</evidence>
<gene>
    <name evidence="1" type="primary">nadA</name>
    <name type="ordered locus">Mmcs_3068</name>
</gene>
<name>NADA_MYCSS</name>
<organism>
    <name type="scientific">Mycobacterium sp. (strain MCS)</name>
    <dbReference type="NCBI Taxonomy" id="164756"/>
    <lineage>
        <taxon>Bacteria</taxon>
        <taxon>Bacillati</taxon>
        <taxon>Actinomycetota</taxon>
        <taxon>Actinomycetes</taxon>
        <taxon>Mycobacteriales</taxon>
        <taxon>Mycobacteriaceae</taxon>
        <taxon>Mycobacterium</taxon>
    </lineage>
</organism>
<protein>
    <recommendedName>
        <fullName evidence="1">Quinolinate synthase</fullName>
        <ecNumber evidence="1">2.5.1.72</ecNumber>
    </recommendedName>
</protein>
<dbReference type="EC" id="2.5.1.72" evidence="1"/>
<dbReference type="EMBL" id="CP000384">
    <property type="protein sequence ID" value="ABG09175.1"/>
    <property type="molecule type" value="Genomic_DNA"/>
</dbReference>
<dbReference type="SMR" id="Q1B7F9"/>
<dbReference type="KEGG" id="mmc:Mmcs_3068"/>
<dbReference type="HOGENOM" id="CLU_047382_0_0_11"/>
<dbReference type="UniPathway" id="UPA00253">
    <property type="reaction ID" value="UER00327"/>
</dbReference>
<dbReference type="GO" id="GO:0005829">
    <property type="term" value="C:cytosol"/>
    <property type="evidence" value="ECO:0007669"/>
    <property type="project" value="TreeGrafter"/>
</dbReference>
<dbReference type="GO" id="GO:0051539">
    <property type="term" value="F:4 iron, 4 sulfur cluster binding"/>
    <property type="evidence" value="ECO:0007669"/>
    <property type="project" value="UniProtKB-KW"/>
</dbReference>
<dbReference type="GO" id="GO:0046872">
    <property type="term" value="F:metal ion binding"/>
    <property type="evidence" value="ECO:0007669"/>
    <property type="project" value="UniProtKB-KW"/>
</dbReference>
<dbReference type="GO" id="GO:0008987">
    <property type="term" value="F:quinolinate synthetase A activity"/>
    <property type="evidence" value="ECO:0007669"/>
    <property type="project" value="UniProtKB-UniRule"/>
</dbReference>
<dbReference type="GO" id="GO:0034628">
    <property type="term" value="P:'de novo' NAD biosynthetic process from L-aspartate"/>
    <property type="evidence" value="ECO:0007669"/>
    <property type="project" value="TreeGrafter"/>
</dbReference>
<dbReference type="FunFam" id="3.40.50.10800:FF:000007">
    <property type="entry name" value="Quinolinate synthase A"/>
    <property type="match status" value="1"/>
</dbReference>
<dbReference type="Gene3D" id="3.40.50.10800">
    <property type="entry name" value="NadA-like"/>
    <property type="match status" value="3"/>
</dbReference>
<dbReference type="HAMAP" id="MF_00568">
    <property type="entry name" value="NadA_type2"/>
    <property type="match status" value="1"/>
</dbReference>
<dbReference type="InterPro" id="IPR003473">
    <property type="entry name" value="NadA"/>
</dbReference>
<dbReference type="InterPro" id="IPR036094">
    <property type="entry name" value="NadA_sf"/>
</dbReference>
<dbReference type="InterPro" id="IPR023066">
    <property type="entry name" value="Quinolinate_synth_type2"/>
</dbReference>
<dbReference type="NCBIfam" id="TIGR00550">
    <property type="entry name" value="nadA"/>
    <property type="match status" value="1"/>
</dbReference>
<dbReference type="NCBIfam" id="NF006878">
    <property type="entry name" value="PRK09375.1-2"/>
    <property type="match status" value="1"/>
</dbReference>
<dbReference type="NCBIfam" id="NF006879">
    <property type="entry name" value="PRK09375.1-4"/>
    <property type="match status" value="1"/>
</dbReference>
<dbReference type="PANTHER" id="PTHR30573:SF0">
    <property type="entry name" value="QUINOLINATE SYNTHASE, CHLOROPLASTIC"/>
    <property type="match status" value="1"/>
</dbReference>
<dbReference type="PANTHER" id="PTHR30573">
    <property type="entry name" value="QUINOLINATE SYNTHETASE A"/>
    <property type="match status" value="1"/>
</dbReference>
<dbReference type="Pfam" id="PF02445">
    <property type="entry name" value="NadA"/>
    <property type="match status" value="1"/>
</dbReference>
<dbReference type="SUPFAM" id="SSF142754">
    <property type="entry name" value="NadA-like"/>
    <property type="match status" value="1"/>
</dbReference>
<comment type="function">
    <text evidence="1">Catalyzes the condensation of iminoaspartate with dihydroxyacetone phosphate to form quinolinate.</text>
</comment>
<comment type="catalytic activity">
    <reaction evidence="1">
        <text>iminosuccinate + dihydroxyacetone phosphate = quinolinate + phosphate + 2 H2O + H(+)</text>
        <dbReference type="Rhea" id="RHEA:25888"/>
        <dbReference type="ChEBI" id="CHEBI:15377"/>
        <dbReference type="ChEBI" id="CHEBI:15378"/>
        <dbReference type="ChEBI" id="CHEBI:29959"/>
        <dbReference type="ChEBI" id="CHEBI:43474"/>
        <dbReference type="ChEBI" id="CHEBI:57642"/>
        <dbReference type="ChEBI" id="CHEBI:77875"/>
        <dbReference type="EC" id="2.5.1.72"/>
    </reaction>
    <physiologicalReaction direction="left-to-right" evidence="1">
        <dbReference type="Rhea" id="RHEA:25889"/>
    </physiologicalReaction>
</comment>
<comment type="cofactor">
    <cofactor evidence="1">
        <name>[4Fe-4S] cluster</name>
        <dbReference type="ChEBI" id="CHEBI:49883"/>
    </cofactor>
    <text evidence="1">Binds 1 [4Fe-4S] cluster per subunit.</text>
</comment>
<comment type="pathway">
    <text evidence="1">Cofactor biosynthesis; NAD(+) biosynthesis; quinolinate from iminoaspartate: step 1/1.</text>
</comment>
<comment type="subcellular location">
    <subcellularLocation>
        <location evidence="1">Cytoplasm</location>
    </subcellularLocation>
</comment>
<comment type="similarity">
    <text evidence="1">Belongs to the quinolinate synthase family. Type 2 subfamily.</text>
</comment>
<accession>Q1B7F9</accession>
<reference key="1">
    <citation type="submission" date="2006-06" db="EMBL/GenBank/DDBJ databases">
        <title>Complete sequence of chromosome of Mycobacterium sp. MCS.</title>
        <authorList>
            <consortium name="US DOE Joint Genome Institute"/>
            <person name="Copeland A."/>
            <person name="Lucas S."/>
            <person name="Lapidus A."/>
            <person name="Barry K."/>
            <person name="Detter J.C."/>
            <person name="Glavina del Rio T."/>
            <person name="Hammon N."/>
            <person name="Israni S."/>
            <person name="Dalin E."/>
            <person name="Tice H."/>
            <person name="Pitluck S."/>
            <person name="Martinez M."/>
            <person name="Schmutz J."/>
            <person name="Larimer F."/>
            <person name="Land M."/>
            <person name="Hauser L."/>
            <person name="Kyrpides N."/>
            <person name="Kim E."/>
            <person name="Miller C.D."/>
            <person name="Hughes J.E."/>
            <person name="Anderson A.J."/>
            <person name="Sims R.C."/>
            <person name="Richardson P."/>
        </authorList>
    </citation>
    <scope>NUCLEOTIDE SEQUENCE [LARGE SCALE GENOMIC DNA]</scope>
    <source>
        <strain>MCS</strain>
    </source>
</reference>
<proteinExistence type="inferred from homology"/>